<keyword id="KW-0030">Aminoacyl-tRNA synthetase</keyword>
<keyword id="KW-0067">ATP-binding</keyword>
<keyword id="KW-0963">Cytoplasm</keyword>
<keyword id="KW-0436">Ligase</keyword>
<keyword id="KW-0479">Metal-binding</keyword>
<keyword id="KW-0547">Nucleotide-binding</keyword>
<keyword id="KW-0648">Protein biosynthesis</keyword>
<keyword id="KW-1185">Reference proteome</keyword>
<keyword id="KW-0862">Zinc</keyword>
<evidence type="ECO:0000255" key="1">
    <source>
        <dbReference type="HAMAP-Rule" id="MF_02003"/>
    </source>
</evidence>
<comment type="function">
    <text evidence="1">Catalyzes the attachment of isoleucine to tRNA(Ile). As IleRS can inadvertently accommodate and process structurally similar amino acids such as valine, to avoid such errors it has two additional distinct tRNA(Ile)-dependent editing activities. One activity is designated as 'pretransfer' editing and involves the hydrolysis of activated Val-AMP. The other activity is designated 'posttransfer' editing and involves deacylation of mischarged Val-tRNA(Ile).</text>
</comment>
<comment type="catalytic activity">
    <reaction evidence="1">
        <text>tRNA(Ile) + L-isoleucine + ATP = L-isoleucyl-tRNA(Ile) + AMP + diphosphate</text>
        <dbReference type="Rhea" id="RHEA:11060"/>
        <dbReference type="Rhea" id="RHEA-COMP:9666"/>
        <dbReference type="Rhea" id="RHEA-COMP:9695"/>
        <dbReference type="ChEBI" id="CHEBI:30616"/>
        <dbReference type="ChEBI" id="CHEBI:33019"/>
        <dbReference type="ChEBI" id="CHEBI:58045"/>
        <dbReference type="ChEBI" id="CHEBI:78442"/>
        <dbReference type="ChEBI" id="CHEBI:78528"/>
        <dbReference type="ChEBI" id="CHEBI:456215"/>
        <dbReference type="EC" id="6.1.1.5"/>
    </reaction>
</comment>
<comment type="cofactor">
    <cofactor evidence="1">
        <name>Zn(2+)</name>
        <dbReference type="ChEBI" id="CHEBI:29105"/>
    </cofactor>
</comment>
<comment type="subunit">
    <text evidence="1">Monomer.</text>
</comment>
<comment type="subcellular location">
    <subcellularLocation>
        <location evidence="1">Cytoplasm</location>
    </subcellularLocation>
</comment>
<comment type="domain">
    <text evidence="1">IleRS has two distinct active sites: one for aminoacylation and one for editing. The misactivated valine is translocated from the active site to the editing site, which sterically excludes the correctly activated isoleucine. The single editing site contains two valyl binding pockets, one specific for each substrate (Val-AMP or Val-tRNA(Ile)).</text>
</comment>
<comment type="similarity">
    <text evidence="1">Belongs to the class-I aminoacyl-tRNA synthetase family. IleS type 2 subfamily.</text>
</comment>
<feature type="chain" id="PRO_0000098548" description="Isoleucine--tRNA ligase">
    <location>
        <begin position="1"/>
        <end position="1059"/>
    </location>
</feature>
<feature type="short sequence motif" description="'HIGH' region">
    <location>
        <begin position="59"/>
        <end position="69"/>
    </location>
</feature>
<feature type="short sequence motif" description="'KMSKS' region">
    <location>
        <begin position="637"/>
        <end position="641"/>
    </location>
</feature>
<feature type="binding site" evidence="1">
    <location>
        <position position="640"/>
    </location>
    <ligand>
        <name>ATP</name>
        <dbReference type="ChEBI" id="CHEBI:30616"/>
    </ligand>
</feature>
<organism>
    <name type="scientific">Mycobacterium leprae (strain TN)</name>
    <dbReference type="NCBI Taxonomy" id="272631"/>
    <lineage>
        <taxon>Bacteria</taxon>
        <taxon>Bacillati</taxon>
        <taxon>Actinomycetota</taxon>
        <taxon>Actinomycetes</taxon>
        <taxon>Mycobacteriales</taxon>
        <taxon>Mycobacteriaceae</taxon>
        <taxon>Mycobacterium</taxon>
    </lineage>
</organism>
<reference key="1">
    <citation type="journal article" date="2001" name="Nature">
        <title>Massive gene decay in the leprosy bacillus.</title>
        <authorList>
            <person name="Cole S.T."/>
            <person name="Eiglmeier K."/>
            <person name="Parkhill J."/>
            <person name="James K.D."/>
            <person name="Thomson N.R."/>
            <person name="Wheeler P.R."/>
            <person name="Honore N."/>
            <person name="Garnier T."/>
            <person name="Churcher C.M."/>
            <person name="Harris D.E."/>
            <person name="Mungall K.L."/>
            <person name="Basham D."/>
            <person name="Brown D."/>
            <person name="Chillingworth T."/>
            <person name="Connor R."/>
            <person name="Davies R.M."/>
            <person name="Devlin K."/>
            <person name="Duthoy S."/>
            <person name="Feltwell T."/>
            <person name="Fraser A."/>
            <person name="Hamlin N."/>
            <person name="Holroyd S."/>
            <person name="Hornsby T."/>
            <person name="Jagels K."/>
            <person name="Lacroix C."/>
            <person name="Maclean J."/>
            <person name="Moule S."/>
            <person name="Murphy L.D."/>
            <person name="Oliver K."/>
            <person name="Quail M.A."/>
            <person name="Rajandream M.A."/>
            <person name="Rutherford K.M."/>
            <person name="Rutter S."/>
            <person name="Seeger K."/>
            <person name="Simon S."/>
            <person name="Simmonds M."/>
            <person name="Skelton J."/>
            <person name="Squares R."/>
            <person name="Squares S."/>
            <person name="Stevens K."/>
            <person name="Taylor K."/>
            <person name="Whitehead S."/>
            <person name="Woodward J.R."/>
            <person name="Barrell B.G."/>
        </authorList>
    </citation>
    <scope>NUCLEOTIDE SEQUENCE [LARGE SCALE GENOMIC DNA]</scope>
    <source>
        <strain>TN</strain>
    </source>
</reference>
<protein>
    <recommendedName>
        <fullName evidence="1">Isoleucine--tRNA ligase</fullName>
        <ecNumber evidence="1">6.1.1.5</ecNumber>
    </recommendedName>
    <alternativeName>
        <fullName evidence="1">Isoleucyl-tRNA synthetase</fullName>
        <shortName evidence="1">IleRS</shortName>
    </alternativeName>
</protein>
<name>SYI_MYCLE</name>
<proteinExistence type="inferred from homology"/>
<dbReference type="EC" id="6.1.1.5" evidence="1"/>
<dbReference type="EMBL" id="AL049478">
    <property type="protein sequence ID" value="CAB39575.1"/>
    <property type="molecule type" value="Genomic_DNA"/>
</dbReference>
<dbReference type="EMBL" id="AL583921">
    <property type="protein sequence ID" value="CAC31576.1"/>
    <property type="molecule type" value="Genomic_DNA"/>
</dbReference>
<dbReference type="PIR" id="E87058">
    <property type="entry name" value="E87058"/>
</dbReference>
<dbReference type="RefSeq" id="NP_301871.1">
    <property type="nucleotide sequence ID" value="NC_002677.1"/>
</dbReference>
<dbReference type="RefSeq" id="WP_010908192.1">
    <property type="nucleotide sequence ID" value="NC_002677.1"/>
</dbReference>
<dbReference type="SMR" id="Q9X7E5"/>
<dbReference type="STRING" id="272631.gene:17575026"/>
<dbReference type="KEGG" id="mle:ML1195"/>
<dbReference type="PATRIC" id="fig|272631.5.peg.2194"/>
<dbReference type="Leproma" id="ML1195"/>
<dbReference type="eggNOG" id="COG0060">
    <property type="taxonomic scope" value="Bacteria"/>
</dbReference>
<dbReference type="HOGENOM" id="CLU_001493_1_1_11"/>
<dbReference type="OrthoDB" id="9810365at2"/>
<dbReference type="Proteomes" id="UP000000806">
    <property type="component" value="Chromosome"/>
</dbReference>
<dbReference type="GO" id="GO:0005737">
    <property type="term" value="C:cytoplasm"/>
    <property type="evidence" value="ECO:0007669"/>
    <property type="project" value="UniProtKB-SubCell"/>
</dbReference>
<dbReference type="GO" id="GO:0002161">
    <property type="term" value="F:aminoacyl-tRNA deacylase activity"/>
    <property type="evidence" value="ECO:0007669"/>
    <property type="project" value="InterPro"/>
</dbReference>
<dbReference type="GO" id="GO:0005524">
    <property type="term" value="F:ATP binding"/>
    <property type="evidence" value="ECO:0007669"/>
    <property type="project" value="UniProtKB-UniRule"/>
</dbReference>
<dbReference type="GO" id="GO:0004822">
    <property type="term" value="F:isoleucine-tRNA ligase activity"/>
    <property type="evidence" value="ECO:0007669"/>
    <property type="project" value="UniProtKB-UniRule"/>
</dbReference>
<dbReference type="GO" id="GO:0000049">
    <property type="term" value="F:tRNA binding"/>
    <property type="evidence" value="ECO:0007669"/>
    <property type="project" value="InterPro"/>
</dbReference>
<dbReference type="GO" id="GO:0008270">
    <property type="term" value="F:zinc ion binding"/>
    <property type="evidence" value="ECO:0007669"/>
    <property type="project" value="UniProtKB-UniRule"/>
</dbReference>
<dbReference type="GO" id="GO:0006428">
    <property type="term" value="P:isoleucyl-tRNA aminoacylation"/>
    <property type="evidence" value="ECO:0007669"/>
    <property type="project" value="UniProtKB-UniRule"/>
</dbReference>
<dbReference type="CDD" id="cd07961">
    <property type="entry name" value="Anticodon_Ia_Ile_ABEc"/>
    <property type="match status" value="1"/>
</dbReference>
<dbReference type="CDD" id="cd00818">
    <property type="entry name" value="IleRS_core"/>
    <property type="match status" value="1"/>
</dbReference>
<dbReference type="FunFam" id="3.40.50.620:FF:000063">
    <property type="entry name" value="Isoleucine--tRNA ligase"/>
    <property type="match status" value="1"/>
</dbReference>
<dbReference type="FunFam" id="3.40.50.620:FF:000075">
    <property type="entry name" value="Isoleucine--tRNA ligase"/>
    <property type="match status" value="1"/>
</dbReference>
<dbReference type="Gene3D" id="3.40.50.620">
    <property type="entry name" value="HUPs"/>
    <property type="match status" value="2"/>
</dbReference>
<dbReference type="Gene3D" id="1.10.730.10">
    <property type="entry name" value="Isoleucyl-tRNA Synthetase, Domain 1"/>
    <property type="match status" value="1"/>
</dbReference>
<dbReference type="Gene3D" id="3.90.740.10">
    <property type="entry name" value="Valyl/Leucyl/Isoleucyl-tRNA synthetase, editing domain"/>
    <property type="match status" value="1"/>
</dbReference>
<dbReference type="HAMAP" id="MF_02003">
    <property type="entry name" value="Ile_tRNA_synth_type2"/>
    <property type="match status" value="1"/>
</dbReference>
<dbReference type="InterPro" id="IPR001412">
    <property type="entry name" value="aa-tRNA-synth_I_CS"/>
</dbReference>
<dbReference type="InterPro" id="IPR002300">
    <property type="entry name" value="aa-tRNA-synth_Ia"/>
</dbReference>
<dbReference type="InterPro" id="IPR033709">
    <property type="entry name" value="Anticodon_Ile_ABEc"/>
</dbReference>
<dbReference type="InterPro" id="IPR002301">
    <property type="entry name" value="Ile-tRNA-ligase"/>
</dbReference>
<dbReference type="InterPro" id="IPR023586">
    <property type="entry name" value="Ile-tRNA-ligase_type2"/>
</dbReference>
<dbReference type="InterPro" id="IPR013155">
    <property type="entry name" value="M/V/L/I-tRNA-synth_anticd-bd"/>
</dbReference>
<dbReference type="InterPro" id="IPR014729">
    <property type="entry name" value="Rossmann-like_a/b/a_fold"/>
</dbReference>
<dbReference type="InterPro" id="IPR009080">
    <property type="entry name" value="tRNAsynth_Ia_anticodon-bd"/>
</dbReference>
<dbReference type="InterPro" id="IPR009008">
    <property type="entry name" value="Val/Leu/Ile-tRNA-synth_edit"/>
</dbReference>
<dbReference type="NCBIfam" id="TIGR00392">
    <property type="entry name" value="ileS"/>
    <property type="match status" value="1"/>
</dbReference>
<dbReference type="PANTHER" id="PTHR42780:SF1">
    <property type="entry name" value="ISOLEUCINE--TRNA LIGASE, CYTOPLASMIC"/>
    <property type="match status" value="1"/>
</dbReference>
<dbReference type="PANTHER" id="PTHR42780">
    <property type="entry name" value="SOLEUCYL-TRNA SYNTHETASE"/>
    <property type="match status" value="1"/>
</dbReference>
<dbReference type="Pfam" id="PF08264">
    <property type="entry name" value="Anticodon_1"/>
    <property type="match status" value="1"/>
</dbReference>
<dbReference type="Pfam" id="PF19302">
    <property type="entry name" value="DUF5915"/>
    <property type="match status" value="1"/>
</dbReference>
<dbReference type="Pfam" id="PF00133">
    <property type="entry name" value="tRNA-synt_1"/>
    <property type="match status" value="1"/>
</dbReference>
<dbReference type="PRINTS" id="PR00984">
    <property type="entry name" value="TRNASYNTHILE"/>
</dbReference>
<dbReference type="SUPFAM" id="SSF47323">
    <property type="entry name" value="Anticodon-binding domain of a subclass of class I aminoacyl-tRNA synthetases"/>
    <property type="match status" value="1"/>
</dbReference>
<dbReference type="SUPFAM" id="SSF52374">
    <property type="entry name" value="Nucleotidylyl transferase"/>
    <property type="match status" value="1"/>
</dbReference>
<dbReference type="SUPFAM" id="SSF50677">
    <property type="entry name" value="ValRS/IleRS/LeuRS editing domain"/>
    <property type="match status" value="1"/>
</dbReference>
<dbReference type="PROSITE" id="PS00178">
    <property type="entry name" value="AA_TRNA_LIGASE_I"/>
    <property type="match status" value="1"/>
</dbReference>
<sequence>MTNSAYPRTDLGADQRGGSPNFPALEAQVLDYWSNDDTFRASIARCDDAPEYVFYDGPPFANGLPHYGHLLTGYVKDIVPRYRTMCGYKVERRFGWDTHGLPAELEVERQLGITDKSQIDAMGIAAFNEACRKSVLRYTEEWQAYVTRQARWVDFDNDYKTLDLSYMESVIWAFKQLWDKGLAYESYRVLPYCWRDETPLSNHELRMDDDVYQSRQDPAVTLGFKVLGGDDEDLVGAYLLVWTTTPWTLPSNLAVAVHPDVTYVDVRAGDRRFVLAQARLTAYARELGDEPEVLATYRGADLLGRHYLPPFQYFYESARNAFQVLPGDFVTTDDGTGIVHIAPAYGEDDMATADKVGIVPVTPVDSNGCFDATVPDYQGQHVFEANAQIIRDLKNQSGSAAVNGAVLLRHETYEHPYPHCWRCRNPLIYRAVSSWFVAVTEFRDRMVELNQQITWYPEHVKDGQFGKWLQGARDWSISRNRYWGTPIPVWKSDDPDYPRIDVYGSLDELERDFGVRPTNLHRPYIDELTRPNPDDPTGLSTMRRIPDVFDVWFDSGSMPYAQVHYPFENDDWFDGFDSADSDKQVDAHYPGDFIVEYIGQARGWFYTLHVLATALFDRPAFKTCIAHGVVLGSNGQKMSKSLRNYPDVTEIFDRDGSDAMRWFLMASPILRGGNLIITEPGIREGMRQVLLPLWNAYSFLALYAPKIGTWHTDVSHVLDRYILAKLAVLRDDLSQAMEVCDISGACEQLRQFTEPLTNWYLRRSRARFWDEDVDAIDTLHTVLEVTARLAAPLLPLITEIIWRSVTGGRSVHLTDWPQANQLPADPDLVAVMDQVRQVCSAASSLRKAKKLRVRLPLPKLVVAVYNSQRLKPYIDLIGDELNVKQIELTDAIDTYGRFEFTVNARVAGPRLGRDVQAAIKVVKAGEGVANPDGTLTAGPVVLQPDEYSSRLVAANPEFTAELPDGSGLVVLDDTVTPELEAEGWAKDRIRELQELRKLIGLDVSDRIRVLMSVPAERADWARVHRDFIAREILATSFEFGEPADSVAIGDGVRVSLLKV</sequence>
<accession>Q9X7E5</accession>
<gene>
    <name evidence="1" type="primary">ileS</name>
    <name type="ordered locus">ML1195</name>
    <name type="ORF">MLCB458.10</name>
</gene>